<feature type="chain" id="PRO_0000283386" description="F-box protein At2g21930">
    <location>
        <begin position="1"/>
        <end position="396"/>
    </location>
</feature>
<feature type="domain" description="F-box" evidence="1">
    <location>
        <begin position="19"/>
        <end position="65"/>
    </location>
</feature>
<gene>
    <name type="ordered locus">At2g21930</name>
    <name type="ORF">F7D8.25</name>
</gene>
<dbReference type="EMBL" id="AC007019">
    <property type="protein sequence ID" value="AAD20410.1"/>
    <property type="molecule type" value="Genomic_DNA"/>
</dbReference>
<dbReference type="EMBL" id="CP002685">
    <property type="protein sequence ID" value="ANM62260.1"/>
    <property type="molecule type" value="Genomic_DNA"/>
</dbReference>
<dbReference type="EMBL" id="AY231396">
    <property type="protein sequence ID" value="AAO86824.1"/>
    <property type="status" value="ALT_INIT"/>
    <property type="molecule type" value="mRNA"/>
</dbReference>
<dbReference type="EMBL" id="AY649276">
    <property type="protein sequence ID" value="AAT69193.1"/>
    <property type="molecule type" value="Genomic_DNA"/>
</dbReference>
<dbReference type="PIR" id="H84606">
    <property type="entry name" value="H84606"/>
</dbReference>
<dbReference type="RefSeq" id="NP_179784.3">
    <property type="nucleotide sequence ID" value="NM_127762.3"/>
</dbReference>
<dbReference type="SMR" id="Q9SJ06"/>
<dbReference type="PaxDb" id="3702-AT2G21930.1"/>
<dbReference type="ProteomicsDB" id="230821"/>
<dbReference type="EnsemblPlants" id="AT2G21930.2">
    <property type="protein sequence ID" value="AT2G21930.2"/>
    <property type="gene ID" value="AT2G21930"/>
</dbReference>
<dbReference type="GeneID" id="816729"/>
<dbReference type="Gramene" id="AT2G21930.2">
    <property type="protein sequence ID" value="AT2G21930.2"/>
    <property type="gene ID" value="AT2G21930"/>
</dbReference>
<dbReference type="KEGG" id="ath:AT2G21930"/>
<dbReference type="Araport" id="AT2G21930"/>
<dbReference type="TAIR" id="AT2G21930"/>
<dbReference type="eggNOG" id="ENOG502SNHU">
    <property type="taxonomic scope" value="Eukaryota"/>
</dbReference>
<dbReference type="HOGENOM" id="CLU_027176_8_0_1"/>
<dbReference type="InParanoid" id="Q9SJ06"/>
<dbReference type="OMA" id="PTYLMNC"/>
<dbReference type="PhylomeDB" id="Q9SJ06"/>
<dbReference type="PRO" id="PR:Q9SJ06"/>
<dbReference type="Proteomes" id="UP000006548">
    <property type="component" value="Chromosome 2"/>
</dbReference>
<dbReference type="ExpressionAtlas" id="Q9SJ06">
    <property type="expression patterns" value="baseline and differential"/>
</dbReference>
<dbReference type="InterPro" id="IPR013187">
    <property type="entry name" value="F-box-assoc_dom_typ3"/>
</dbReference>
<dbReference type="InterPro" id="IPR017451">
    <property type="entry name" value="F-box-assoc_interact_dom"/>
</dbReference>
<dbReference type="InterPro" id="IPR036047">
    <property type="entry name" value="F-box-like_dom_sf"/>
</dbReference>
<dbReference type="InterPro" id="IPR001810">
    <property type="entry name" value="F-box_dom"/>
</dbReference>
<dbReference type="NCBIfam" id="TIGR01640">
    <property type="entry name" value="F_box_assoc_1"/>
    <property type="match status" value="1"/>
</dbReference>
<dbReference type="PANTHER" id="PTHR31111">
    <property type="entry name" value="BNAA05G37150D PROTEIN-RELATED"/>
    <property type="match status" value="1"/>
</dbReference>
<dbReference type="PANTHER" id="PTHR31111:SF106">
    <property type="entry name" value="F-BOX ASSOCIATED UBIQUITINATION EFFECTOR FAMILY PROTEIN"/>
    <property type="match status" value="1"/>
</dbReference>
<dbReference type="Pfam" id="PF00646">
    <property type="entry name" value="F-box"/>
    <property type="match status" value="1"/>
</dbReference>
<dbReference type="Pfam" id="PF08268">
    <property type="entry name" value="FBA_3"/>
    <property type="match status" value="1"/>
</dbReference>
<dbReference type="SMART" id="SM00256">
    <property type="entry name" value="FBOX"/>
    <property type="match status" value="1"/>
</dbReference>
<dbReference type="SUPFAM" id="SSF81383">
    <property type="entry name" value="F-box domain"/>
    <property type="match status" value="1"/>
</dbReference>
<dbReference type="PROSITE" id="PS50181">
    <property type="entry name" value="FBOX"/>
    <property type="match status" value="1"/>
</dbReference>
<keyword id="KW-1185">Reference proteome</keyword>
<evidence type="ECO:0000255" key="1">
    <source>
        <dbReference type="PROSITE-ProRule" id="PRU00080"/>
    </source>
</evidence>
<evidence type="ECO:0000305" key="2"/>
<organism>
    <name type="scientific">Arabidopsis thaliana</name>
    <name type="common">Mouse-ear cress</name>
    <dbReference type="NCBI Taxonomy" id="3702"/>
    <lineage>
        <taxon>Eukaryota</taxon>
        <taxon>Viridiplantae</taxon>
        <taxon>Streptophyta</taxon>
        <taxon>Embryophyta</taxon>
        <taxon>Tracheophyta</taxon>
        <taxon>Spermatophyta</taxon>
        <taxon>Magnoliopsida</taxon>
        <taxon>eudicotyledons</taxon>
        <taxon>Gunneridae</taxon>
        <taxon>Pentapetalae</taxon>
        <taxon>rosids</taxon>
        <taxon>malvids</taxon>
        <taxon>Brassicales</taxon>
        <taxon>Brassicaceae</taxon>
        <taxon>Camelineae</taxon>
        <taxon>Arabidopsis</taxon>
    </lineage>
</organism>
<proteinExistence type="evidence at transcript level"/>
<name>FB115_ARATH</name>
<reference key="1">
    <citation type="journal article" date="1999" name="Nature">
        <title>Sequence and analysis of chromosome 2 of the plant Arabidopsis thaliana.</title>
        <authorList>
            <person name="Lin X."/>
            <person name="Kaul S."/>
            <person name="Rounsley S.D."/>
            <person name="Shea T.P."/>
            <person name="Benito M.-I."/>
            <person name="Town C.D."/>
            <person name="Fujii C.Y."/>
            <person name="Mason T.M."/>
            <person name="Bowman C.L."/>
            <person name="Barnstead M.E."/>
            <person name="Feldblyum T.V."/>
            <person name="Buell C.R."/>
            <person name="Ketchum K.A."/>
            <person name="Lee J.J."/>
            <person name="Ronning C.M."/>
            <person name="Koo H.L."/>
            <person name="Moffat K.S."/>
            <person name="Cronin L.A."/>
            <person name="Shen M."/>
            <person name="Pai G."/>
            <person name="Van Aken S."/>
            <person name="Umayam L."/>
            <person name="Tallon L.J."/>
            <person name="Gill J.E."/>
            <person name="Adams M.D."/>
            <person name="Carrera A.J."/>
            <person name="Creasy T.H."/>
            <person name="Goodman H.M."/>
            <person name="Somerville C.R."/>
            <person name="Copenhaver G.P."/>
            <person name="Preuss D."/>
            <person name="Nierman W.C."/>
            <person name="White O."/>
            <person name="Eisen J.A."/>
            <person name="Salzberg S.L."/>
            <person name="Fraser C.M."/>
            <person name="Venter J.C."/>
        </authorList>
    </citation>
    <scope>NUCLEOTIDE SEQUENCE [LARGE SCALE GENOMIC DNA]</scope>
    <source>
        <strain>cv. Columbia</strain>
    </source>
</reference>
<reference key="2">
    <citation type="journal article" date="2017" name="Plant J.">
        <title>Araport11: a complete reannotation of the Arabidopsis thaliana reference genome.</title>
        <authorList>
            <person name="Cheng C.Y."/>
            <person name="Krishnakumar V."/>
            <person name="Chan A.P."/>
            <person name="Thibaud-Nissen F."/>
            <person name="Schobel S."/>
            <person name="Town C.D."/>
        </authorList>
    </citation>
    <scope>GENOME REANNOTATION</scope>
    <source>
        <strain>cv. Columbia</strain>
    </source>
</reference>
<reference key="3">
    <citation type="journal article" date="2005" name="Plant Physiol.">
        <title>Analysis of the cDNAs of hypothetical genes on Arabidopsis chromosome 2 reveals numerous transcript variants.</title>
        <authorList>
            <person name="Xiao Y.-L."/>
            <person name="Smith S.R."/>
            <person name="Ishmael N."/>
            <person name="Redman J.C."/>
            <person name="Kumar N."/>
            <person name="Monaghan E.L."/>
            <person name="Ayele M."/>
            <person name="Haas B.J."/>
            <person name="Wu H.C."/>
            <person name="Town C.D."/>
        </authorList>
    </citation>
    <scope>NUCLEOTIDE SEQUENCE [LARGE SCALE MRNA] OF 4-396</scope>
    <source>
        <strain>cv. Columbia</strain>
    </source>
</reference>
<reference key="4">
    <citation type="submission" date="2004-06" db="EMBL/GenBank/DDBJ databases">
        <authorList>
            <person name="Underwood B.A."/>
            <person name="Xiao Y.-L."/>
            <person name="Moskal W.A. Jr."/>
            <person name="Monaghan E.L."/>
            <person name="Wang W."/>
            <person name="Redman J.C."/>
            <person name="Wu H.C."/>
            <person name="Utterback T."/>
            <person name="Town C.D."/>
        </authorList>
    </citation>
    <scope>NUCLEOTIDE SEQUENCE [LARGE SCALE GENOMIC DNA] OF 62-396</scope>
    <source>
        <strain>cv. Columbia</strain>
    </source>
</reference>
<protein>
    <recommendedName>
        <fullName>F-box protein At2g21930</fullName>
    </recommendedName>
</protein>
<accession>Q9SJ06</accession>
<accession>F4IIJ1</accession>
<accession>Q6DR39</accession>
<accession>Q84RL5</accession>
<sequence length="396" mass="45181">MEKQRSKKTKISDDLITCSGNSVQIPFDLIPEILKRLPVKTLARFLSVSKEYTSIIRNRDFMKSYLINSSTRPQSLIFTIAGGGIHCFFSLIDQGESTSSSKPTYLMNCPHLQLKTFAPSVHGLICHGPPSTLIVSSPRLIVSNPSTRRSIILPKIDANHECIYHHMGYDPIDGDYKVLCMMKGMHVYQRRYLAKELQVFTLRKGNSWRMVEDFPPHCLCHEDTPDLCINGVLYYVAMLDTASNHAVMSFDVRSEKFDLIKGGPDGDLNPKLTRYEGKPALLFPGSDYRINLWVIEDAAKHEWSKMSYDVSSTSLIRNPYFHHCVFCTNDAGEIVLAPDFVRTKTFVVLYYHPKKNTMRSVVIKGIRDRKIPLWDEASYHRIISVFSGQVDNLMFL</sequence>
<comment type="sequence caution" evidence="2">
    <conflict type="erroneous initiation">
        <sequence resource="EMBL-CDS" id="AAO86824"/>
    </conflict>
    <text>Truncated N-terminus.</text>
</comment>